<accession>B6YSW2</accession>
<reference key="1">
    <citation type="journal article" date="2008" name="J. Bacteriol.">
        <title>The complete genome sequence of Thermococcus onnurineus NA1 reveals a mixed heterotrophic and carboxydotrophic metabolism.</title>
        <authorList>
            <person name="Lee H.S."/>
            <person name="Kang S.G."/>
            <person name="Bae S.S."/>
            <person name="Lim J.K."/>
            <person name="Cho Y."/>
            <person name="Kim Y.J."/>
            <person name="Jeon J.H."/>
            <person name="Cha S.-S."/>
            <person name="Kwon K.K."/>
            <person name="Kim H.-T."/>
            <person name="Park C.-J."/>
            <person name="Lee H.-W."/>
            <person name="Kim S.I."/>
            <person name="Chun J."/>
            <person name="Colwell R.R."/>
            <person name="Kim S.-J."/>
            <person name="Lee J.-H."/>
        </authorList>
    </citation>
    <scope>NUCLEOTIDE SEQUENCE [LARGE SCALE GENOMIC DNA]</scope>
    <source>
        <strain>NA1</strain>
    </source>
</reference>
<proteinExistence type="inferred from homology"/>
<gene>
    <name evidence="1" type="primary">psmB1</name>
    <name type="ordered locus">TON_0164</name>
</gene>
<keyword id="KW-0068">Autocatalytic cleavage</keyword>
<keyword id="KW-0963">Cytoplasm</keyword>
<keyword id="KW-0378">Hydrolase</keyword>
<keyword id="KW-0645">Protease</keyword>
<keyword id="KW-0647">Proteasome</keyword>
<keyword id="KW-0888">Threonine protease</keyword>
<keyword id="KW-0865">Zymogen</keyword>
<organism>
    <name type="scientific">Thermococcus onnurineus (strain NA1)</name>
    <dbReference type="NCBI Taxonomy" id="523850"/>
    <lineage>
        <taxon>Archaea</taxon>
        <taxon>Methanobacteriati</taxon>
        <taxon>Methanobacteriota</taxon>
        <taxon>Thermococci</taxon>
        <taxon>Thermococcales</taxon>
        <taxon>Thermococcaceae</taxon>
        <taxon>Thermococcus</taxon>
    </lineage>
</organism>
<feature type="propeptide" id="PRO_0000397468" description="Removed in mature form; by autocatalysis" evidence="1">
    <location>
        <begin position="1"/>
        <end position="7"/>
    </location>
</feature>
<feature type="chain" id="PRO_0000397469" description="Proteasome subunit beta 1">
    <location>
        <begin position="8"/>
        <end position="203"/>
    </location>
</feature>
<feature type="active site" description="Nucleophile" evidence="1">
    <location>
        <position position="8"/>
    </location>
</feature>
<sequence length="203" mass="21988">MAEKLKGTTTVGIVCKDGVVLAADRRASLGNMVLSKEVTKVFQIDDHLALAGAGSVGDILSLVRLLRAEVKLYRAKVGREISVKALATLTSNILHGSRFMPYFGWFLIAGYDEKPALYSLDMAGGVTEDKFTAAGSGMELAFAVLEDGYKDDINVEEGVKLALKAIKIATRRDVFTGDGITLVTVTEEGYRELNREEIEALLK</sequence>
<protein>
    <recommendedName>
        <fullName evidence="1">Proteasome subunit beta 1</fullName>
        <ecNumber evidence="1">3.4.25.1</ecNumber>
    </recommendedName>
    <alternativeName>
        <fullName evidence="1">20S proteasome beta subunit 1</fullName>
    </alternativeName>
    <alternativeName>
        <fullName evidence="1">Proteasome core protein PsmB 1</fullName>
    </alternativeName>
</protein>
<comment type="function">
    <text evidence="1">Component of the proteasome core, a large protease complex with broad specificity involved in protein degradation.</text>
</comment>
<comment type="catalytic activity">
    <reaction evidence="1">
        <text>Cleavage of peptide bonds with very broad specificity.</text>
        <dbReference type="EC" id="3.4.25.1"/>
    </reaction>
</comment>
<comment type="activity regulation">
    <text evidence="1">The formation of the proteasomal ATPase PAN-20S proteasome complex, via the docking of the C-termini of PAN into the intersubunit pockets in the alpha-rings, triggers opening of the gate for substrate entry. Interconversion between the open-gate and close-gate conformations leads to a dynamic regulation of the 20S proteasome proteolysis activity.</text>
</comment>
<comment type="subunit">
    <text evidence="1">The 20S proteasome core is composed of 14 alpha and 14 beta subunits that assemble into four stacked heptameric rings, resulting in a barrel-shaped structure. The two inner rings, each composed of seven catalytic beta subunits, are sandwiched by two outer rings, each composed of seven alpha subunits. The catalytic chamber with the active sites is on the inside of the barrel. Has a gated structure, the ends of the cylinder being occluded by the N-termini of the alpha-subunits. Is capped at one or both ends by the proteasome regulatory ATPase, PAN.</text>
</comment>
<comment type="subcellular location">
    <subcellularLocation>
        <location evidence="1">Cytoplasm</location>
    </subcellularLocation>
</comment>
<comment type="similarity">
    <text evidence="1">Belongs to the peptidase T1B family.</text>
</comment>
<dbReference type="EC" id="3.4.25.1" evidence="1"/>
<dbReference type="EMBL" id="CP000855">
    <property type="protein sequence ID" value="ACJ15649.1"/>
    <property type="molecule type" value="Genomic_DNA"/>
</dbReference>
<dbReference type="RefSeq" id="WP_012571122.1">
    <property type="nucleotide sequence ID" value="NC_011529.1"/>
</dbReference>
<dbReference type="SMR" id="B6YSW2"/>
<dbReference type="STRING" id="523850.TON_0164"/>
<dbReference type="MEROPS" id="T01.002"/>
<dbReference type="GeneID" id="7017818"/>
<dbReference type="KEGG" id="ton:TON_0164"/>
<dbReference type="PATRIC" id="fig|523850.10.peg.164"/>
<dbReference type="eggNOG" id="arCOG00970">
    <property type="taxonomic scope" value="Archaea"/>
</dbReference>
<dbReference type="HOGENOM" id="CLU_035750_7_2_2"/>
<dbReference type="OrthoDB" id="6330at2157"/>
<dbReference type="Proteomes" id="UP000002727">
    <property type="component" value="Chromosome"/>
</dbReference>
<dbReference type="GO" id="GO:0005737">
    <property type="term" value="C:cytoplasm"/>
    <property type="evidence" value="ECO:0007669"/>
    <property type="project" value="UniProtKB-SubCell"/>
</dbReference>
<dbReference type="GO" id="GO:0019774">
    <property type="term" value="C:proteasome core complex, beta-subunit complex"/>
    <property type="evidence" value="ECO:0007669"/>
    <property type="project" value="UniProtKB-UniRule"/>
</dbReference>
<dbReference type="GO" id="GO:0004298">
    <property type="term" value="F:threonine-type endopeptidase activity"/>
    <property type="evidence" value="ECO:0007669"/>
    <property type="project" value="UniProtKB-UniRule"/>
</dbReference>
<dbReference type="GO" id="GO:0010498">
    <property type="term" value="P:proteasomal protein catabolic process"/>
    <property type="evidence" value="ECO:0007669"/>
    <property type="project" value="UniProtKB-UniRule"/>
</dbReference>
<dbReference type="CDD" id="cd03764">
    <property type="entry name" value="proteasome_beta_archeal"/>
    <property type="match status" value="1"/>
</dbReference>
<dbReference type="FunFam" id="3.60.20.10:FF:000049">
    <property type="entry name" value="Proteasome subunit beta"/>
    <property type="match status" value="1"/>
</dbReference>
<dbReference type="Gene3D" id="3.60.20.10">
    <property type="entry name" value="Glutamine Phosphoribosylpyrophosphate, subunit 1, domain 1"/>
    <property type="match status" value="1"/>
</dbReference>
<dbReference type="HAMAP" id="MF_02113_A">
    <property type="entry name" value="Proteasome_B_A"/>
    <property type="match status" value="1"/>
</dbReference>
<dbReference type="InterPro" id="IPR029055">
    <property type="entry name" value="Ntn_hydrolases_N"/>
</dbReference>
<dbReference type="InterPro" id="IPR019983">
    <property type="entry name" value="Pept_T1A_Psome_bsu_arc"/>
</dbReference>
<dbReference type="InterPro" id="IPR000243">
    <property type="entry name" value="Pept_T1A_subB"/>
</dbReference>
<dbReference type="InterPro" id="IPR016050">
    <property type="entry name" value="Proteasome_bsu_CS"/>
</dbReference>
<dbReference type="InterPro" id="IPR001353">
    <property type="entry name" value="Proteasome_sua/b"/>
</dbReference>
<dbReference type="InterPro" id="IPR023333">
    <property type="entry name" value="Proteasome_suB-type"/>
</dbReference>
<dbReference type="NCBIfam" id="TIGR03634">
    <property type="entry name" value="arc_protsome_B"/>
    <property type="match status" value="1"/>
</dbReference>
<dbReference type="PANTHER" id="PTHR32194:SF0">
    <property type="entry name" value="ATP-DEPENDENT PROTEASE SUBUNIT HSLV"/>
    <property type="match status" value="1"/>
</dbReference>
<dbReference type="PANTHER" id="PTHR32194">
    <property type="entry name" value="METALLOPROTEASE TLDD"/>
    <property type="match status" value="1"/>
</dbReference>
<dbReference type="Pfam" id="PF00227">
    <property type="entry name" value="Proteasome"/>
    <property type="match status" value="1"/>
</dbReference>
<dbReference type="PRINTS" id="PR00141">
    <property type="entry name" value="PROTEASOME"/>
</dbReference>
<dbReference type="SUPFAM" id="SSF56235">
    <property type="entry name" value="N-terminal nucleophile aminohydrolases (Ntn hydrolases)"/>
    <property type="match status" value="1"/>
</dbReference>
<dbReference type="PROSITE" id="PS00854">
    <property type="entry name" value="PROTEASOME_BETA_1"/>
    <property type="match status" value="1"/>
</dbReference>
<dbReference type="PROSITE" id="PS51476">
    <property type="entry name" value="PROTEASOME_BETA_2"/>
    <property type="match status" value="1"/>
</dbReference>
<name>PSB1_THEON</name>
<evidence type="ECO:0000255" key="1">
    <source>
        <dbReference type="HAMAP-Rule" id="MF_02113"/>
    </source>
</evidence>